<accession>B8GL29</accession>
<name>RIMK_THISH</name>
<protein>
    <recommendedName>
        <fullName evidence="1">Probable alpha-L-glutamate ligase</fullName>
        <ecNumber evidence="1">6.3.2.-</ecNumber>
    </recommendedName>
</protein>
<evidence type="ECO:0000255" key="1">
    <source>
        <dbReference type="HAMAP-Rule" id="MF_01552"/>
    </source>
</evidence>
<sequence>MKIAILSRDAKLYSTRRLMEAARANGHEVQVLDPLRCYMNITSAKPTIHYKGKELTGFDAVIPRIGASITFYGTAVLRQFEMMGVFPVNESVAISRARDKLRSLQLLSRKGVGLPVTGFAHSPDDIDDLLAEVQGAPLVVKLLEGTQGVGVVLAETRKAAESVIQAFMGLRQNILVQEFVKEAGGTDLRCFVIGGKVVAAMQRRAKEGEFRSNLHRGGSAEPVKLTPQERATAVKAAKVIGLNVCGVDILRSSHGPVVIEVNASPGLEGIETASGVDVAGRIVSFIEQNARPHRTQTRGKG</sequence>
<dbReference type="EC" id="6.3.2.-" evidence="1"/>
<dbReference type="EMBL" id="CP001339">
    <property type="protein sequence ID" value="ACL71547.1"/>
    <property type="molecule type" value="Genomic_DNA"/>
</dbReference>
<dbReference type="RefSeq" id="WP_012637036.1">
    <property type="nucleotide sequence ID" value="NC_011901.1"/>
</dbReference>
<dbReference type="SMR" id="B8GL29"/>
<dbReference type="STRING" id="396588.Tgr7_0449"/>
<dbReference type="KEGG" id="tgr:Tgr7_0449"/>
<dbReference type="eggNOG" id="COG0189">
    <property type="taxonomic scope" value="Bacteria"/>
</dbReference>
<dbReference type="HOGENOM" id="CLU_054353_0_1_6"/>
<dbReference type="OrthoDB" id="3865600at2"/>
<dbReference type="Proteomes" id="UP000002383">
    <property type="component" value="Chromosome"/>
</dbReference>
<dbReference type="GO" id="GO:0005737">
    <property type="term" value="C:cytoplasm"/>
    <property type="evidence" value="ECO:0007669"/>
    <property type="project" value="TreeGrafter"/>
</dbReference>
<dbReference type="GO" id="GO:0005524">
    <property type="term" value="F:ATP binding"/>
    <property type="evidence" value="ECO:0007669"/>
    <property type="project" value="UniProtKB-UniRule"/>
</dbReference>
<dbReference type="GO" id="GO:0046872">
    <property type="term" value="F:metal ion binding"/>
    <property type="evidence" value="ECO:0007669"/>
    <property type="project" value="UniProtKB-KW"/>
</dbReference>
<dbReference type="GO" id="GO:0018169">
    <property type="term" value="F:ribosomal S6-glutamic acid ligase activity"/>
    <property type="evidence" value="ECO:0007669"/>
    <property type="project" value="TreeGrafter"/>
</dbReference>
<dbReference type="GO" id="GO:0036211">
    <property type="term" value="P:protein modification process"/>
    <property type="evidence" value="ECO:0007669"/>
    <property type="project" value="InterPro"/>
</dbReference>
<dbReference type="GO" id="GO:0009432">
    <property type="term" value="P:SOS response"/>
    <property type="evidence" value="ECO:0007669"/>
    <property type="project" value="TreeGrafter"/>
</dbReference>
<dbReference type="GO" id="GO:0006412">
    <property type="term" value="P:translation"/>
    <property type="evidence" value="ECO:0007669"/>
    <property type="project" value="UniProtKB-KW"/>
</dbReference>
<dbReference type="FunFam" id="3.30.470.20:FF:000058">
    <property type="entry name" value="Alpha-aminoadipate--LysW ligase LysX protein"/>
    <property type="match status" value="1"/>
</dbReference>
<dbReference type="FunFam" id="3.40.50.20:FF:000004">
    <property type="entry name" value="Probable alpha-L-glutamate ligase"/>
    <property type="match status" value="1"/>
</dbReference>
<dbReference type="FunFam" id="3.30.1490.20:FF:000005">
    <property type="entry name" value="Probable alpha-L-glutamate ligase 1"/>
    <property type="match status" value="1"/>
</dbReference>
<dbReference type="Gene3D" id="3.40.50.20">
    <property type="match status" value="1"/>
</dbReference>
<dbReference type="Gene3D" id="3.30.1490.20">
    <property type="entry name" value="ATP-grasp fold, A domain"/>
    <property type="match status" value="1"/>
</dbReference>
<dbReference type="Gene3D" id="3.30.470.20">
    <property type="entry name" value="ATP-grasp fold, B domain"/>
    <property type="match status" value="1"/>
</dbReference>
<dbReference type="HAMAP" id="MF_01552">
    <property type="entry name" value="RimK"/>
    <property type="match status" value="1"/>
</dbReference>
<dbReference type="InterPro" id="IPR011761">
    <property type="entry name" value="ATP-grasp"/>
</dbReference>
<dbReference type="InterPro" id="IPR013651">
    <property type="entry name" value="ATP-grasp_RimK-type"/>
</dbReference>
<dbReference type="InterPro" id="IPR013815">
    <property type="entry name" value="ATP_grasp_subdomain_1"/>
</dbReference>
<dbReference type="InterPro" id="IPR023533">
    <property type="entry name" value="RimK"/>
</dbReference>
<dbReference type="InterPro" id="IPR041107">
    <property type="entry name" value="Rimk_N"/>
</dbReference>
<dbReference type="InterPro" id="IPR004666">
    <property type="entry name" value="Rp_bS6_RimK/Lys_biosynth_LsyX"/>
</dbReference>
<dbReference type="NCBIfam" id="NF007764">
    <property type="entry name" value="PRK10446.1"/>
    <property type="match status" value="1"/>
</dbReference>
<dbReference type="NCBIfam" id="TIGR00768">
    <property type="entry name" value="rimK_fam"/>
    <property type="match status" value="1"/>
</dbReference>
<dbReference type="PANTHER" id="PTHR21621:SF7">
    <property type="entry name" value="RIBOSOMAL PROTEIN BS6--L-GLUTAMATE LIGASE"/>
    <property type="match status" value="1"/>
</dbReference>
<dbReference type="PANTHER" id="PTHR21621">
    <property type="entry name" value="RIBOSOMAL PROTEIN S6 MODIFICATION PROTEIN"/>
    <property type="match status" value="1"/>
</dbReference>
<dbReference type="Pfam" id="PF08443">
    <property type="entry name" value="RimK"/>
    <property type="match status" value="1"/>
</dbReference>
<dbReference type="Pfam" id="PF18030">
    <property type="entry name" value="Rimk_N"/>
    <property type="match status" value="1"/>
</dbReference>
<dbReference type="SUPFAM" id="SSF56059">
    <property type="entry name" value="Glutathione synthetase ATP-binding domain-like"/>
    <property type="match status" value="1"/>
</dbReference>
<dbReference type="PROSITE" id="PS50975">
    <property type="entry name" value="ATP_GRASP"/>
    <property type="match status" value="1"/>
</dbReference>
<gene>
    <name evidence="1" type="primary">rimK</name>
    <name type="ordered locus">Tgr7_0449</name>
</gene>
<reference key="1">
    <citation type="journal article" date="2011" name="Stand. Genomic Sci.">
        <title>Complete genome sequence of 'Thioalkalivibrio sulfidophilus' HL-EbGr7.</title>
        <authorList>
            <person name="Muyzer G."/>
            <person name="Sorokin D.Y."/>
            <person name="Mavromatis K."/>
            <person name="Lapidus A."/>
            <person name="Clum A."/>
            <person name="Ivanova N."/>
            <person name="Pati A."/>
            <person name="d'Haeseleer P."/>
            <person name="Woyke T."/>
            <person name="Kyrpides N.C."/>
        </authorList>
    </citation>
    <scope>NUCLEOTIDE SEQUENCE [LARGE SCALE GENOMIC DNA]</scope>
    <source>
        <strain>HL-EbGR7</strain>
    </source>
</reference>
<organism>
    <name type="scientific">Thioalkalivibrio sulfidiphilus (strain HL-EbGR7)</name>
    <dbReference type="NCBI Taxonomy" id="396588"/>
    <lineage>
        <taxon>Bacteria</taxon>
        <taxon>Pseudomonadati</taxon>
        <taxon>Pseudomonadota</taxon>
        <taxon>Gammaproteobacteria</taxon>
        <taxon>Chromatiales</taxon>
        <taxon>Ectothiorhodospiraceae</taxon>
        <taxon>Thioalkalivibrio</taxon>
    </lineage>
</organism>
<feature type="chain" id="PRO_1000185327" description="Probable alpha-L-glutamate ligase">
    <location>
        <begin position="1"/>
        <end position="301"/>
    </location>
</feature>
<feature type="domain" description="ATP-grasp" evidence="1">
    <location>
        <begin position="104"/>
        <end position="287"/>
    </location>
</feature>
<feature type="binding site" evidence="1">
    <location>
        <position position="141"/>
    </location>
    <ligand>
        <name>ATP</name>
        <dbReference type="ChEBI" id="CHEBI:30616"/>
    </ligand>
</feature>
<feature type="binding site" evidence="1">
    <location>
        <begin position="178"/>
        <end position="179"/>
    </location>
    <ligand>
        <name>ATP</name>
        <dbReference type="ChEBI" id="CHEBI:30616"/>
    </ligand>
</feature>
<feature type="binding site" evidence="1">
    <location>
        <position position="187"/>
    </location>
    <ligand>
        <name>ATP</name>
        <dbReference type="ChEBI" id="CHEBI:30616"/>
    </ligand>
</feature>
<feature type="binding site" evidence="1">
    <location>
        <begin position="211"/>
        <end position="213"/>
    </location>
    <ligand>
        <name>ATP</name>
        <dbReference type="ChEBI" id="CHEBI:30616"/>
    </ligand>
</feature>
<feature type="binding site" evidence="1">
    <location>
        <position position="248"/>
    </location>
    <ligand>
        <name>Mg(2+)</name>
        <dbReference type="ChEBI" id="CHEBI:18420"/>
        <label>1</label>
    </ligand>
</feature>
<feature type="binding site" evidence="1">
    <location>
        <position position="248"/>
    </location>
    <ligand>
        <name>Mn(2+)</name>
        <dbReference type="ChEBI" id="CHEBI:29035"/>
        <label>1</label>
    </ligand>
</feature>
<feature type="binding site" evidence="1">
    <location>
        <position position="260"/>
    </location>
    <ligand>
        <name>Mg(2+)</name>
        <dbReference type="ChEBI" id="CHEBI:18420"/>
        <label>1</label>
    </ligand>
</feature>
<feature type="binding site" evidence="1">
    <location>
        <position position="260"/>
    </location>
    <ligand>
        <name>Mg(2+)</name>
        <dbReference type="ChEBI" id="CHEBI:18420"/>
        <label>2</label>
    </ligand>
</feature>
<feature type="binding site" evidence="1">
    <location>
        <position position="260"/>
    </location>
    <ligand>
        <name>Mn(2+)</name>
        <dbReference type="ChEBI" id="CHEBI:29035"/>
        <label>1</label>
    </ligand>
</feature>
<feature type="binding site" evidence="1">
    <location>
        <position position="260"/>
    </location>
    <ligand>
        <name>Mn(2+)</name>
        <dbReference type="ChEBI" id="CHEBI:29035"/>
        <label>2</label>
    </ligand>
</feature>
<feature type="binding site" evidence="1">
    <location>
        <position position="262"/>
    </location>
    <ligand>
        <name>Mg(2+)</name>
        <dbReference type="ChEBI" id="CHEBI:18420"/>
        <label>2</label>
    </ligand>
</feature>
<feature type="binding site" evidence="1">
    <location>
        <position position="262"/>
    </location>
    <ligand>
        <name>Mn(2+)</name>
        <dbReference type="ChEBI" id="CHEBI:29035"/>
        <label>2</label>
    </ligand>
</feature>
<comment type="cofactor">
    <cofactor evidence="1">
        <name>Mg(2+)</name>
        <dbReference type="ChEBI" id="CHEBI:18420"/>
    </cofactor>
    <cofactor evidence="1">
        <name>Mn(2+)</name>
        <dbReference type="ChEBI" id="CHEBI:29035"/>
    </cofactor>
    <text evidence="1">Binds 2 magnesium or manganese ions per subunit.</text>
</comment>
<comment type="similarity">
    <text evidence="1">Belongs to the RimK family.</text>
</comment>
<proteinExistence type="inferred from homology"/>
<keyword id="KW-0067">ATP-binding</keyword>
<keyword id="KW-0436">Ligase</keyword>
<keyword id="KW-0460">Magnesium</keyword>
<keyword id="KW-0464">Manganese</keyword>
<keyword id="KW-0479">Metal-binding</keyword>
<keyword id="KW-0547">Nucleotide-binding</keyword>
<keyword id="KW-0648">Protein biosynthesis</keyword>
<keyword id="KW-1185">Reference proteome</keyword>